<sequence>MPRFVDRVVIHARAGSGGNGCASVHREKFKPLGGPDGGNGGRGGSIVFVVDPQVHTLLDFHFHPHISAPSGKQGMGNNRDGAAGADLEVKVPDGTVVLDENGRLLADLVGAGTRFEAAAGGRGGLGNAALASRARKAPGFALLGEPGETRELTLELKTVADVGLIGFPSAGKSSLVSAISAAKPKIADYPFTTLVPNLGVVSAGEHTFTVADVPGLIPGASAGRGLGLDFLRHIERCAVLVHVIDCATADPGRDPISDIDALEAELAAYTPTLQGDVTLGDLTERPRAVVLNKIDVPEARELAEFVRDEIAERGWPVFLVSTVAREGLQPLIFGLWQMISEYQSAQPEIVPRRSVIRPVPVDDSGFRVEPDPRQPGAFVVSGARPERWVRQTNFDNDEAVGYLADRLARLGVEEELLRLGARPGCAVTIGDMTFDWEPQTPAGQQVVLSGRGTDARLERTERVGAAERKAARRQRRTGDDAERGTTERGENT</sequence>
<comment type="function">
    <text evidence="1">An essential GTPase which binds GTP, GDP and possibly (p)ppGpp with moderate affinity, with high nucleotide exchange rates and a fairly low GTP hydrolysis rate. Plays a role in control of the cell cycle, stress response, ribosome biogenesis and in those bacteria that undergo differentiation, in morphogenesis control.</text>
</comment>
<comment type="cofactor">
    <cofactor evidence="1">
        <name>Mg(2+)</name>
        <dbReference type="ChEBI" id="CHEBI:18420"/>
    </cofactor>
</comment>
<comment type="subunit">
    <text evidence="1">Monomer.</text>
</comment>
<comment type="subcellular location">
    <subcellularLocation>
        <location evidence="1">Cytoplasm</location>
    </subcellularLocation>
</comment>
<comment type="similarity">
    <text evidence="1">Belongs to the TRAFAC class OBG-HflX-like GTPase superfamily. OBG GTPase family.</text>
</comment>
<proteinExistence type="inferred from homology"/>
<gene>
    <name evidence="1" type="primary">obg</name>
    <name type="ordered locus">MAV_1731</name>
</gene>
<reference key="1">
    <citation type="submission" date="2006-10" db="EMBL/GenBank/DDBJ databases">
        <authorList>
            <person name="Fleischmann R.D."/>
            <person name="Dodson R.J."/>
            <person name="Haft D.H."/>
            <person name="Merkel J.S."/>
            <person name="Nelson W.C."/>
            <person name="Fraser C.M."/>
        </authorList>
    </citation>
    <scope>NUCLEOTIDE SEQUENCE [LARGE SCALE GENOMIC DNA]</scope>
    <source>
        <strain>104</strain>
    </source>
</reference>
<name>OBG_MYCA1</name>
<organism>
    <name type="scientific">Mycobacterium avium (strain 104)</name>
    <dbReference type="NCBI Taxonomy" id="243243"/>
    <lineage>
        <taxon>Bacteria</taxon>
        <taxon>Bacillati</taxon>
        <taxon>Actinomycetota</taxon>
        <taxon>Actinomycetes</taxon>
        <taxon>Mycobacteriales</taxon>
        <taxon>Mycobacteriaceae</taxon>
        <taxon>Mycobacterium</taxon>
        <taxon>Mycobacterium avium complex (MAC)</taxon>
    </lineage>
</organism>
<feature type="chain" id="PRO_0000386050" description="GTPase Obg">
    <location>
        <begin position="1"/>
        <end position="492"/>
    </location>
</feature>
<feature type="domain" description="Obg" evidence="3">
    <location>
        <begin position="2"/>
        <end position="159"/>
    </location>
</feature>
<feature type="domain" description="OBG-type G" evidence="1">
    <location>
        <begin position="160"/>
        <end position="340"/>
    </location>
</feature>
<feature type="domain" description="OCT" evidence="2">
    <location>
        <begin position="358"/>
        <end position="438"/>
    </location>
</feature>
<feature type="region of interest" description="Disordered" evidence="4">
    <location>
        <begin position="449"/>
        <end position="492"/>
    </location>
</feature>
<feature type="compositionally biased region" description="Basic and acidic residues" evidence="4">
    <location>
        <begin position="453"/>
        <end position="469"/>
    </location>
</feature>
<feature type="compositionally biased region" description="Basic and acidic residues" evidence="4">
    <location>
        <begin position="476"/>
        <end position="492"/>
    </location>
</feature>
<feature type="binding site" evidence="1">
    <location>
        <begin position="166"/>
        <end position="173"/>
    </location>
    <ligand>
        <name>GTP</name>
        <dbReference type="ChEBI" id="CHEBI:37565"/>
    </ligand>
</feature>
<feature type="binding site" evidence="1">
    <location>
        <position position="173"/>
    </location>
    <ligand>
        <name>Mg(2+)</name>
        <dbReference type="ChEBI" id="CHEBI:18420"/>
    </ligand>
</feature>
<feature type="binding site" evidence="1">
    <location>
        <begin position="191"/>
        <end position="195"/>
    </location>
    <ligand>
        <name>GTP</name>
        <dbReference type="ChEBI" id="CHEBI:37565"/>
    </ligand>
</feature>
<feature type="binding site" evidence="1">
    <location>
        <position position="193"/>
    </location>
    <ligand>
        <name>Mg(2+)</name>
        <dbReference type="ChEBI" id="CHEBI:18420"/>
    </ligand>
</feature>
<feature type="binding site" evidence="1">
    <location>
        <begin position="212"/>
        <end position="215"/>
    </location>
    <ligand>
        <name>GTP</name>
        <dbReference type="ChEBI" id="CHEBI:37565"/>
    </ligand>
</feature>
<feature type="binding site" evidence="1">
    <location>
        <begin position="292"/>
        <end position="295"/>
    </location>
    <ligand>
        <name>GTP</name>
        <dbReference type="ChEBI" id="CHEBI:37565"/>
    </ligand>
</feature>
<feature type="binding site" evidence="1">
    <location>
        <begin position="321"/>
        <end position="323"/>
    </location>
    <ligand>
        <name>GTP</name>
        <dbReference type="ChEBI" id="CHEBI:37565"/>
    </ligand>
</feature>
<evidence type="ECO:0000255" key="1">
    <source>
        <dbReference type="HAMAP-Rule" id="MF_01454"/>
    </source>
</evidence>
<evidence type="ECO:0000255" key="2">
    <source>
        <dbReference type="PROSITE-ProRule" id="PRU01229"/>
    </source>
</evidence>
<evidence type="ECO:0000255" key="3">
    <source>
        <dbReference type="PROSITE-ProRule" id="PRU01231"/>
    </source>
</evidence>
<evidence type="ECO:0000256" key="4">
    <source>
        <dbReference type="SAM" id="MobiDB-lite"/>
    </source>
</evidence>
<protein>
    <recommendedName>
        <fullName evidence="1">GTPase Obg</fullName>
        <ecNumber evidence="1">3.6.5.-</ecNumber>
    </recommendedName>
    <alternativeName>
        <fullName evidence="1">GTP-binding protein Obg</fullName>
    </alternativeName>
</protein>
<keyword id="KW-0963">Cytoplasm</keyword>
<keyword id="KW-0342">GTP-binding</keyword>
<keyword id="KW-0378">Hydrolase</keyword>
<keyword id="KW-0460">Magnesium</keyword>
<keyword id="KW-0479">Metal-binding</keyword>
<keyword id="KW-0547">Nucleotide-binding</keyword>
<accession>A0QDH0</accession>
<dbReference type="EC" id="3.6.5.-" evidence="1"/>
<dbReference type="EMBL" id="CP000479">
    <property type="protein sequence ID" value="ABK68251.1"/>
    <property type="molecule type" value="Genomic_DNA"/>
</dbReference>
<dbReference type="SMR" id="A0QDH0"/>
<dbReference type="KEGG" id="mav:MAV_1731"/>
<dbReference type="HOGENOM" id="CLU_011747_2_1_11"/>
<dbReference type="Proteomes" id="UP000001574">
    <property type="component" value="Chromosome"/>
</dbReference>
<dbReference type="GO" id="GO:0005737">
    <property type="term" value="C:cytoplasm"/>
    <property type="evidence" value="ECO:0007669"/>
    <property type="project" value="UniProtKB-SubCell"/>
</dbReference>
<dbReference type="GO" id="GO:0005525">
    <property type="term" value="F:GTP binding"/>
    <property type="evidence" value="ECO:0007669"/>
    <property type="project" value="UniProtKB-UniRule"/>
</dbReference>
<dbReference type="GO" id="GO:0003924">
    <property type="term" value="F:GTPase activity"/>
    <property type="evidence" value="ECO:0007669"/>
    <property type="project" value="UniProtKB-UniRule"/>
</dbReference>
<dbReference type="GO" id="GO:0000287">
    <property type="term" value="F:magnesium ion binding"/>
    <property type="evidence" value="ECO:0007669"/>
    <property type="project" value="InterPro"/>
</dbReference>
<dbReference type="GO" id="GO:0042254">
    <property type="term" value="P:ribosome biogenesis"/>
    <property type="evidence" value="ECO:0007669"/>
    <property type="project" value="UniProtKB-UniRule"/>
</dbReference>
<dbReference type="CDD" id="cd01898">
    <property type="entry name" value="Obg"/>
    <property type="match status" value="1"/>
</dbReference>
<dbReference type="FunFam" id="2.70.210.12:FF:000001">
    <property type="entry name" value="GTPase Obg"/>
    <property type="match status" value="1"/>
</dbReference>
<dbReference type="Gene3D" id="3.30.300.350">
    <property type="entry name" value="GTP-binding protein OBG, C-terminal domain"/>
    <property type="match status" value="1"/>
</dbReference>
<dbReference type="Gene3D" id="2.70.210.12">
    <property type="entry name" value="GTP1/OBG domain"/>
    <property type="match status" value="1"/>
</dbReference>
<dbReference type="Gene3D" id="3.40.50.300">
    <property type="entry name" value="P-loop containing nucleotide triphosphate hydrolases"/>
    <property type="match status" value="1"/>
</dbReference>
<dbReference type="HAMAP" id="MF_01454">
    <property type="entry name" value="GTPase_Obg"/>
    <property type="match status" value="1"/>
</dbReference>
<dbReference type="InterPro" id="IPR031167">
    <property type="entry name" value="G_OBG"/>
</dbReference>
<dbReference type="InterPro" id="IPR006073">
    <property type="entry name" value="GTP-bd"/>
</dbReference>
<dbReference type="InterPro" id="IPR014100">
    <property type="entry name" value="GTP-bd_Obg/CgtA"/>
</dbReference>
<dbReference type="InterPro" id="IPR036346">
    <property type="entry name" value="GTP-bd_prot_GTP1/OBG_C_sf"/>
</dbReference>
<dbReference type="InterPro" id="IPR006074">
    <property type="entry name" value="GTP1-OBG_CS"/>
</dbReference>
<dbReference type="InterPro" id="IPR006169">
    <property type="entry name" value="GTP1_OBG_dom"/>
</dbReference>
<dbReference type="InterPro" id="IPR036726">
    <property type="entry name" value="GTP1_OBG_dom_sf"/>
</dbReference>
<dbReference type="InterPro" id="IPR045086">
    <property type="entry name" value="OBG_GTPase"/>
</dbReference>
<dbReference type="InterPro" id="IPR015349">
    <property type="entry name" value="OCT_dom"/>
</dbReference>
<dbReference type="InterPro" id="IPR027417">
    <property type="entry name" value="P-loop_NTPase"/>
</dbReference>
<dbReference type="NCBIfam" id="TIGR02729">
    <property type="entry name" value="Obg_CgtA"/>
    <property type="match status" value="1"/>
</dbReference>
<dbReference type="NCBIfam" id="TIGR03595">
    <property type="entry name" value="Obg_CgtA_exten"/>
    <property type="match status" value="1"/>
</dbReference>
<dbReference type="NCBIfam" id="NF008954">
    <property type="entry name" value="PRK12296.1"/>
    <property type="match status" value="1"/>
</dbReference>
<dbReference type="NCBIfam" id="NF008955">
    <property type="entry name" value="PRK12297.1"/>
    <property type="match status" value="1"/>
</dbReference>
<dbReference type="NCBIfam" id="NF008956">
    <property type="entry name" value="PRK12299.1"/>
    <property type="match status" value="1"/>
</dbReference>
<dbReference type="PANTHER" id="PTHR11702">
    <property type="entry name" value="DEVELOPMENTALLY REGULATED GTP-BINDING PROTEIN-RELATED"/>
    <property type="match status" value="1"/>
</dbReference>
<dbReference type="PANTHER" id="PTHR11702:SF31">
    <property type="entry name" value="MITOCHONDRIAL RIBOSOME-ASSOCIATED GTPASE 2"/>
    <property type="match status" value="1"/>
</dbReference>
<dbReference type="Pfam" id="PF09269">
    <property type="entry name" value="DUF1967"/>
    <property type="match status" value="1"/>
</dbReference>
<dbReference type="Pfam" id="PF01018">
    <property type="entry name" value="GTP1_OBG"/>
    <property type="match status" value="1"/>
</dbReference>
<dbReference type="Pfam" id="PF01926">
    <property type="entry name" value="MMR_HSR1"/>
    <property type="match status" value="1"/>
</dbReference>
<dbReference type="PRINTS" id="PR00326">
    <property type="entry name" value="GTP1OBG"/>
</dbReference>
<dbReference type="SUPFAM" id="SSF102741">
    <property type="entry name" value="Obg GTP-binding protein C-terminal domain"/>
    <property type="match status" value="1"/>
</dbReference>
<dbReference type="SUPFAM" id="SSF82051">
    <property type="entry name" value="Obg GTP-binding protein N-terminal domain"/>
    <property type="match status" value="1"/>
</dbReference>
<dbReference type="SUPFAM" id="SSF52540">
    <property type="entry name" value="P-loop containing nucleoside triphosphate hydrolases"/>
    <property type="match status" value="1"/>
</dbReference>
<dbReference type="PROSITE" id="PS51710">
    <property type="entry name" value="G_OBG"/>
    <property type="match status" value="1"/>
</dbReference>
<dbReference type="PROSITE" id="PS00905">
    <property type="entry name" value="GTP1_OBG"/>
    <property type="match status" value="1"/>
</dbReference>
<dbReference type="PROSITE" id="PS51883">
    <property type="entry name" value="OBG"/>
    <property type="match status" value="1"/>
</dbReference>
<dbReference type="PROSITE" id="PS51881">
    <property type="entry name" value="OCT"/>
    <property type="match status" value="1"/>
</dbReference>